<name>CNT1_CAEEL</name>
<evidence type="ECO:0000255" key="1"/>
<evidence type="ECO:0000255" key="2">
    <source>
        <dbReference type="PROSITE-ProRule" id="PRU00145"/>
    </source>
</evidence>
<evidence type="ECO:0000255" key="3">
    <source>
        <dbReference type="PROSITE-ProRule" id="PRU00288"/>
    </source>
</evidence>
<evidence type="ECO:0000256" key="4">
    <source>
        <dbReference type="SAM" id="MobiDB-lite"/>
    </source>
</evidence>
<evidence type="ECO:0000269" key="5">
    <source>
    </source>
</evidence>
<evidence type="ECO:0000269" key="6">
    <source>
    </source>
</evidence>
<evidence type="ECO:0000303" key="7">
    <source>
    </source>
</evidence>
<evidence type="ECO:0000305" key="8"/>
<evidence type="ECO:0000305" key="9">
    <source>
    </source>
</evidence>
<evidence type="ECO:0000312" key="10">
    <source>
        <dbReference type="EMBL" id="CAA10735.1"/>
    </source>
</evidence>
<evidence type="ECO:0000312" key="11">
    <source>
        <dbReference type="Proteomes" id="UP000001940"/>
    </source>
</evidence>
<evidence type="ECO:0000312" key="12">
    <source>
        <dbReference type="WormBase" id="Y17G7B.15a"/>
    </source>
</evidence>
<evidence type="ECO:0000312" key="13">
    <source>
        <dbReference type="WormBase" id="Y17G7B.15b"/>
    </source>
</evidence>
<dbReference type="EMBL" id="AJ132698">
    <property type="protein sequence ID" value="CAA10734.1"/>
    <property type="molecule type" value="mRNA"/>
</dbReference>
<dbReference type="EMBL" id="AJ132699">
    <property type="protein sequence ID" value="CAA10735.1"/>
    <property type="molecule type" value="mRNA"/>
</dbReference>
<dbReference type="EMBL" id="BX284602">
    <property type="protein sequence ID" value="CAA19462.2"/>
    <property type="molecule type" value="Genomic_DNA"/>
</dbReference>
<dbReference type="EMBL" id="BX284602">
    <property type="protein sequence ID" value="CAA19463.2"/>
    <property type="molecule type" value="Genomic_DNA"/>
</dbReference>
<dbReference type="PIR" id="T26508">
    <property type="entry name" value="T26508"/>
</dbReference>
<dbReference type="PIR" id="T26509">
    <property type="entry name" value="T26509"/>
</dbReference>
<dbReference type="RefSeq" id="NP_001022412.1">
    <property type="nucleotide sequence ID" value="NM_001027241.1"/>
</dbReference>
<dbReference type="RefSeq" id="NP_001022413.1">
    <molecule id="Q9XXH8-2"/>
    <property type="nucleotide sequence ID" value="NM_001027242.4"/>
</dbReference>
<dbReference type="RefSeq" id="NP_001369802.1">
    <molecule id="Q9XXH8-1"/>
    <property type="nucleotide sequence ID" value="NM_001383965.2"/>
</dbReference>
<dbReference type="SMR" id="Q9XXH8"/>
<dbReference type="DIP" id="DIP-26983N"/>
<dbReference type="DIP" id="DIP-61532N"/>
<dbReference type="FunCoup" id="Q9XXH8">
    <property type="interactions" value="2470"/>
</dbReference>
<dbReference type="IntAct" id="Q9XXH8">
    <property type="interactions" value="4"/>
</dbReference>
<dbReference type="STRING" id="6239.Y17G7B.15a.1"/>
<dbReference type="PaxDb" id="6239-Y17G7B.15a"/>
<dbReference type="PeptideAtlas" id="Q9XXH8"/>
<dbReference type="EnsemblMetazoa" id="Y17G7B.15a.1">
    <molecule id="Q9XXH8-1"/>
    <property type="protein sequence ID" value="Y17G7B.15a.1"/>
    <property type="gene ID" value="WBGene00000565"/>
</dbReference>
<dbReference type="EnsemblMetazoa" id="Y17G7B.15b.1">
    <molecule id="Q9XXH8-2"/>
    <property type="protein sequence ID" value="Y17G7B.15b.1"/>
    <property type="gene ID" value="WBGene00000565"/>
</dbReference>
<dbReference type="GeneID" id="174848"/>
<dbReference type="KEGG" id="cel:CELE_Y17G7B.15"/>
<dbReference type="UCSC" id="Y17G7B.15a">
    <property type="organism name" value="c. elegans"/>
</dbReference>
<dbReference type="AGR" id="WB:WBGene00000565"/>
<dbReference type="CTD" id="174848"/>
<dbReference type="WormBase" id="Y17G7B.15a">
    <molecule id="Q9XXH8-1"/>
    <property type="protein sequence ID" value="CE28110"/>
    <property type="gene ID" value="WBGene00000565"/>
    <property type="gene designation" value="cnt-1"/>
</dbReference>
<dbReference type="WormBase" id="Y17G7B.15b">
    <molecule id="Q9XXH8-2"/>
    <property type="protein sequence ID" value="CE25223"/>
    <property type="gene ID" value="WBGene00000565"/>
    <property type="gene designation" value="cnt-1"/>
</dbReference>
<dbReference type="eggNOG" id="KOG0521">
    <property type="taxonomic scope" value="Eukaryota"/>
</dbReference>
<dbReference type="HOGENOM" id="CLU_012513_0_0_1"/>
<dbReference type="InParanoid" id="Q9XXH8"/>
<dbReference type="OMA" id="SMDEIQL"/>
<dbReference type="OrthoDB" id="10070851at2759"/>
<dbReference type="PhylomeDB" id="Q9XXH8"/>
<dbReference type="PRO" id="PR:Q9XXH8"/>
<dbReference type="Proteomes" id="UP000001940">
    <property type="component" value="Chromosome II"/>
</dbReference>
<dbReference type="Bgee" id="WBGene00000565">
    <property type="expression patterns" value="Expressed in pharyngeal muscle cell (C elegans) and 3 other cell types or tissues"/>
</dbReference>
<dbReference type="ExpressionAtlas" id="Q9XXH8">
    <property type="expression patterns" value="baseline and differential"/>
</dbReference>
<dbReference type="GO" id="GO:0016323">
    <property type="term" value="C:basolateral plasma membrane"/>
    <property type="evidence" value="ECO:0000314"/>
    <property type="project" value="UniProtKB"/>
</dbReference>
<dbReference type="GO" id="GO:0005737">
    <property type="term" value="C:cytoplasm"/>
    <property type="evidence" value="ECO:0000314"/>
    <property type="project" value="WormBase"/>
</dbReference>
<dbReference type="GO" id="GO:0098592">
    <property type="term" value="C:cytoplasmic side of apical plasma membrane"/>
    <property type="evidence" value="ECO:0000314"/>
    <property type="project" value="UniProtKB"/>
</dbReference>
<dbReference type="GO" id="GO:0009898">
    <property type="term" value="C:cytoplasmic side of plasma membrane"/>
    <property type="evidence" value="ECO:0000314"/>
    <property type="project" value="WormBase"/>
</dbReference>
<dbReference type="GO" id="GO:0031901">
    <property type="term" value="C:early endosome membrane"/>
    <property type="evidence" value="ECO:0000314"/>
    <property type="project" value="UniProtKB"/>
</dbReference>
<dbReference type="GO" id="GO:0055038">
    <property type="term" value="C:recycling endosome membrane"/>
    <property type="evidence" value="ECO:0000314"/>
    <property type="project" value="UniProtKB"/>
</dbReference>
<dbReference type="GO" id="GO:0005096">
    <property type="term" value="F:GTPase activator activity"/>
    <property type="evidence" value="ECO:0007669"/>
    <property type="project" value="InterPro"/>
</dbReference>
<dbReference type="GO" id="GO:0005547">
    <property type="term" value="F:phosphatidylinositol-3,4,5-trisphosphate binding"/>
    <property type="evidence" value="ECO:0000314"/>
    <property type="project" value="WormBase"/>
</dbReference>
<dbReference type="GO" id="GO:0005546">
    <property type="term" value="F:phosphatidylinositol-4,5-bisphosphate binding"/>
    <property type="evidence" value="ECO:0000314"/>
    <property type="project" value="WormBase"/>
</dbReference>
<dbReference type="GO" id="GO:0070273">
    <property type="term" value="F:phosphatidylinositol-4-phosphate binding"/>
    <property type="evidence" value="ECO:0000314"/>
    <property type="project" value="WormBase"/>
</dbReference>
<dbReference type="GO" id="GO:0031267">
    <property type="term" value="F:small GTPase binding"/>
    <property type="evidence" value="ECO:0000353"/>
    <property type="project" value="UniProtKB"/>
</dbReference>
<dbReference type="GO" id="GO:0008270">
    <property type="term" value="F:zinc ion binding"/>
    <property type="evidence" value="ECO:0007669"/>
    <property type="project" value="UniProtKB-KW"/>
</dbReference>
<dbReference type="GO" id="GO:0006915">
    <property type="term" value="P:apoptotic process"/>
    <property type="evidence" value="ECO:0000315"/>
    <property type="project" value="WormBase"/>
</dbReference>
<dbReference type="GO" id="GO:0006897">
    <property type="term" value="P:endocytosis"/>
    <property type="evidence" value="ECO:0007669"/>
    <property type="project" value="UniProtKB-KW"/>
</dbReference>
<dbReference type="GO" id="GO:1902647">
    <property type="term" value="P:negative regulation of 1-phosphatidyl-1D-myo-inositol 4,5-bisphosphate biosynthetic process"/>
    <property type="evidence" value="ECO:0000315"/>
    <property type="project" value="UniProtKB"/>
</dbReference>
<dbReference type="GO" id="GO:1905751">
    <property type="term" value="P:positive regulation of endosome to plasma membrane protein transport"/>
    <property type="evidence" value="ECO:0000315"/>
    <property type="project" value="UniProtKB"/>
</dbReference>
<dbReference type="GO" id="GO:0015031">
    <property type="term" value="P:protein transport"/>
    <property type="evidence" value="ECO:0007669"/>
    <property type="project" value="UniProtKB-KW"/>
</dbReference>
<dbReference type="CDD" id="cd08835">
    <property type="entry name" value="ArfGap_ACAP"/>
    <property type="match status" value="1"/>
</dbReference>
<dbReference type="CDD" id="cd07603">
    <property type="entry name" value="BAR_ACAPs"/>
    <property type="match status" value="1"/>
</dbReference>
<dbReference type="CDD" id="cd13250">
    <property type="entry name" value="PH_ACAP"/>
    <property type="match status" value="1"/>
</dbReference>
<dbReference type="FunFam" id="1.20.1270.60:FF:000025">
    <property type="entry name" value="arf-GAP with coiled-coil, ANK repeat and PH domain-containing protein 2"/>
    <property type="match status" value="1"/>
</dbReference>
<dbReference type="FunFam" id="1.25.40.20:FF:000610">
    <property type="entry name" value="Protein CBR-CNT-1"/>
    <property type="match status" value="1"/>
</dbReference>
<dbReference type="FunFam" id="2.30.29.30:FF:000384">
    <property type="entry name" value="Uncharacterized protein, isoform A"/>
    <property type="match status" value="1"/>
</dbReference>
<dbReference type="Gene3D" id="1.25.40.20">
    <property type="entry name" value="Ankyrin repeat-containing domain"/>
    <property type="match status" value="1"/>
</dbReference>
<dbReference type="Gene3D" id="1.10.220.150">
    <property type="entry name" value="Arf GTPase activating protein"/>
    <property type="match status" value="1"/>
</dbReference>
<dbReference type="Gene3D" id="1.20.1270.60">
    <property type="entry name" value="Arfaptin homology (AH) domain/BAR domain"/>
    <property type="match status" value="1"/>
</dbReference>
<dbReference type="Gene3D" id="2.30.29.30">
    <property type="entry name" value="Pleckstrin-homology domain (PH domain)/Phosphotyrosine-binding domain (PTB)"/>
    <property type="match status" value="1"/>
</dbReference>
<dbReference type="InterPro" id="IPR045258">
    <property type="entry name" value="ACAP1/2/3-like"/>
</dbReference>
<dbReference type="InterPro" id="IPR027267">
    <property type="entry name" value="AH/BAR_dom_sf"/>
</dbReference>
<dbReference type="InterPro" id="IPR002110">
    <property type="entry name" value="Ankyrin_rpt"/>
</dbReference>
<dbReference type="InterPro" id="IPR036770">
    <property type="entry name" value="Ankyrin_rpt-contain_sf"/>
</dbReference>
<dbReference type="InterPro" id="IPR037278">
    <property type="entry name" value="ARFGAP/RecO"/>
</dbReference>
<dbReference type="InterPro" id="IPR001164">
    <property type="entry name" value="ArfGAP_dom"/>
</dbReference>
<dbReference type="InterPro" id="IPR038508">
    <property type="entry name" value="ArfGAP_dom_sf"/>
</dbReference>
<dbReference type="InterPro" id="IPR004148">
    <property type="entry name" value="BAR_dom"/>
</dbReference>
<dbReference type="InterPro" id="IPR011993">
    <property type="entry name" value="PH-like_dom_sf"/>
</dbReference>
<dbReference type="InterPro" id="IPR001849">
    <property type="entry name" value="PH_domain"/>
</dbReference>
<dbReference type="PANTHER" id="PTHR23180:SF399">
    <property type="entry name" value="BLOWN FUSE, ISOFORM A-RELATED"/>
    <property type="match status" value="1"/>
</dbReference>
<dbReference type="PANTHER" id="PTHR23180">
    <property type="entry name" value="CENTAURIN/ARF"/>
    <property type="match status" value="1"/>
</dbReference>
<dbReference type="Pfam" id="PF12796">
    <property type="entry name" value="Ank_2"/>
    <property type="match status" value="1"/>
</dbReference>
<dbReference type="Pfam" id="PF01412">
    <property type="entry name" value="ArfGap"/>
    <property type="match status" value="1"/>
</dbReference>
<dbReference type="Pfam" id="PF16746">
    <property type="entry name" value="BAR_3"/>
    <property type="match status" value="1"/>
</dbReference>
<dbReference type="Pfam" id="PF00169">
    <property type="entry name" value="PH"/>
    <property type="match status" value="1"/>
</dbReference>
<dbReference type="PRINTS" id="PR00405">
    <property type="entry name" value="REVINTRACTNG"/>
</dbReference>
<dbReference type="SMART" id="SM00248">
    <property type="entry name" value="ANK"/>
    <property type="match status" value="3"/>
</dbReference>
<dbReference type="SMART" id="SM00105">
    <property type="entry name" value="ArfGap"/>
    <property type="match status" value="1"/>
</dbReference>
<dbReference type="SMART" id="SM00233">
    <property type="entry name" value="PH"/>
    <property type="match status" value="1"/>
</dbReference>
<dbReference type="SUPFAM" id="SSF48403">
    <property type="entry name" value="Ankyrin repeat"/>
    <property type="match status" value="1"/>
</dbReference>
<dbReference type="SUPFAM" id="SSF57863">
    <property type="entry name" value="ArfGap/RecO-like zinc finger"/>
    <property type="match status" value="1"/>
</dbReference>
<dbReference type="SUPFAM" id="SSF103657">
    <property type="entry name" value="BAR/IMD domain-like"/>
    <property type="match status" value="1"/>
</dbReference>
<dbReference type="SUPFAM" id="SSF50729">
    <property type="entry name" value="PH domain-like"/>
    <property type="match status" value="1"/>
</dbReference>
<dbReference type="PROSITE" id="PS50297">
    <property type="entry name" value="ANK_REP_REGION"/>
    <property type="match status" value="1"/>
</dbReference>
<dbReference type="PROSITE" id="PS50088">
    <property type="entry name" value="ANK_REPEAT"/>
    <property type="match status" value="2"/>
</dbReference>
<dbReference type="PROSITE" id="PS50115">
    <property type="entry name" value="ARFGAP"/>
    <property type="match status" value="1"/>
</dbReference>
<dbReference type="PROSITE" id="PS50003">
    <property type="entry name" value="PH_DOMAIN"/>
    <property type="match status" value="1"/>
</dbReference>
<keyword id="KW-0025">Alternative splicing</keyword>
<keyword id="KW-0040">ANK repeat</keyword>
<keyword id="KW-0053">Apoptosis</keyword>
<keyword id="KW-1003">Cell membrane</keyword>
<keyword id="KW-0963">Cytoplasm</keyword>
<keyword id="KW-0254">Endocytosis</keyword>
<keyword id="KW-0967">Endosome</keyword>
<keyword id="KW-0446">Lipid-binding</keyword>
<keyword id="KW-0472">Membrane</keyword>
<keyword id="KW-0479">Metal-binding</keyword>
<keyword id="KW-0653">Protein transport</keyword>
<keyword id="KW-1185">Reference proteome</keyword>
<keyword id="KW-0677">Repeat</keyword>
<keyword id="KW-0813">Transport</keyword>
<keyword id="KW-0862">Zinc</keyword>
<keyword id="KW-0863">Zinc-finger</keyword>
<sequence length="826" mass="90583">MTVSNNGMAMPSVPPKIDCSEAIQDSPKFRATVAQHAMYFNRLENRLNEMLRHITAMIDFSKNYTNTFYKLTVSVNQLCDESFSGNPLASTTFQGLSEAYAHTVNLFRTYFDHSNVVTFTKLSNFIKIELTKVAESRAHFENMSQSMDDALVKNASISRQKPADATEGRNALTAVGTCFAHTTLDYVANINIAHAHKDHMILDALWTLVRESSAFFSKGHATFDEWTAADNGAIADTIQTFAAKSKLIERKMQDVHSLVPKEMFQHPSGMPIEPDVMMEGYLYKRSSNAFKTWNRRWFQIKDKQLLYSHRSTDLEPATIMEENLRICLVRPAPSNIDRIGCFELVTPTRIHLLQADSESLCQDWMRALQRTILALHEGDSVDVASTSPRNKTTSMSSGVTLTSANAISPLSNAMDVTKGRSVSDPASTYTSANTSSISTAAGFSSSTTAFEQVRRVPGNEVCADCGSPAPKWVSINLGVVLCIECSGAHRSLGVQTSKVRSLCMDSIDNELRDVLLALGNRQVNEIFLAHLPPADSIVPPQINEKSARPAREAWIKAKYVERRFAVAEDTRARSSATNRQEHLKHKTSIGGNSSSNGVNRSSSYADVQDAESGGLLDADPWSADLSVPVPTASKRLSACGSDTNLDAIGSSSIDTKTVEWDSVKEACECGDLLALMTAYAQGFDLNALHNGTTALHIATRNGQTAAVEFLLLNGAKINMLDEKLNTPLHLAAKEGHTLPVCQLLKRGADSNLANVDSKTPLDIAMECTHADIVTLFRVTIMRNDFNADFNNPMDETVEAVISDIARRAATEKEQKKTESLKSTSDI</sequence>
<organism evidence="11">
    <name type="scientific">Caenorhabditis elegans</name>
    <dbReference type="NCBI Taxonomy" id="6239"/>
    <lineage>
        <taxon>Eukaryota</taxon>
        <taxon>Metazoa</taxon>
        <taxon>Ecdysozoa</taxon>
        <taxon>Nematoda</taxon>
        <taxon>Chromadorea</taxon>
        <taxon>Rhabditida</taxon>
        <taxon>Rhabditina</taxon>
        <taxon>Rhabditomorpha</taxon>
        <taxon>Rhabditoidea</taxon>
        <taxon>Rhabditidae</taxon>
        <taxon>Peloderinae</taxon>
        <taxon>Caenorhabditis</taxon>
    </lineage>
</organism>
<protein>
    <recommendedName>
        <fullName evidence="8">Arf-GAP with ANK repeat and PH domain-containing protein cnt-1</fullName>
    </recommendedName>
    <alternativeName>
        <fullName evidence="7">CED-3 protease suppressor</fullName>
    </alternativeName>
    <alternativeName>
        <fullName evidence="12">Centaurin 1</fullName>
    </alternativeName>
    <component>
        <recommendedName>
            <fullName evidence="7">Truncated cnt-1</fullName>
            <shortName evidence="7">tCNT-1</shortName>
        </recommendedName>
    </component>
</protein>
<reference evidence="10" key="1">
    <citation type="submission" date="1999-02" db="EMBL/GenBank/DDBJ databases">
        <title>Investigating the functions of the centaurin proteins in phosphoinositide signalling in C. elegans.</title>
        <authorList>
            <person name="Harrington L.S."/>
            <person name="Baylis H.A."/>
            <person name="Jackson T.R."/>
        </authorList>
    </citation>
    <scope>NUCLEOTIDE SEQUENCE [MRNA] (ISOFORMS A AND B)</scope>
    <source>
        <strain evidence="10">Bristol N2</strain>
    </source>
</reference>
<reference evidence="11" key="2">
    <citation type="journal article" date="1998" name="Science">
        <title>Genome sequence of the nematode C. elegans: a platform for investigating biology.</title>
        <authorList>
            <consortium name="The C. elegans sequencing consortium"/>
        </authorList>
    </citation>
    <scope>NUCLEOTIDE SEQUENCE [LARGE SCALE GENOMIC DNA]</scope>
    <source>
        <strain evidence="11">Bristol N2</strain>
    </source>
</reference>
<reference evidence="8" key="3">
    <citation type="journal article" date="2012" name="Proc. Natl. Acad. Sci. U.S.A.">
        <title>RAB-10-GTPase-mediated regulation of endosomal phosphatidylinositol-4,5-bisphosphate.</title>
        <authorList>
            <person name="Shi A."/>
            <person name="Liu O."/>
            <person name="Koenig S."/>
            <person name="Banerjee R."/>
            <person name="Chen C.C."/>
            <person name="Eimer S."/>
            <person name="Grant B.D."/>
        </authorList>
    </citation>
    <scope>FUNCTION</scope>
    <scope>INTERACTION WITH RAB-10; RAB-8 AND RAB-35</scope>
    <scope>SUBCELLULAR LOCATION</scope>
</reference>
<reference evidence="8" key="4">
    <citation type="journal article" date="2014" name="Nat. Struct. Mol. Biol.">
        <title>Caspase-activated phosphoinositide binding by CNT-1 promotes apoptosis by inhibiting the AKT pathway.</title>
        <authorList>
            <person name="Nakagawa A."/>
            <person name="Sullivan K.D."/>
            <person name="Xue D."/>
        </authorList>
    </citation>
    <scope>FUNCTION</scope>
    <scope>SUBCELLULAR LOCATION</scope>
    <scope>DEVELOPMENTAL STAGE</scope>
    <scope>DOMAIN</scope>
    <scope>PROTEOLYTIC CLEAVAGE</scope>
    <scope>DISRUPTION PHENOTYPE</scope>
    <scope>MUTAGENESIS OF LYS-284; ASP-382; ASP-508 AND ASP-609</scope>
</reference>
<gene>
    <name evidence="12" type="primary">cnt-1</name>
    <name evidence="7" type="synonym">cps-2</name>
    <name evidence="12" type="ORF">Y17G7B.15</name>
</gene>
<accession>Q9XXH8</accession>
<accession>Q9XXH9</accession>
<accession>Q9XZQ1</accession>
<accession>Q9XZQ2</accession>
<feature type="chain" id="PRO_0000439216" description="Arf-GAP with ANK repeat and PH domain-containing protein cnt-1" evidence="8">
    <location>
        <begin position="1"/>
        <end position="826"/>
    </location>
</feature>
<feature type="chain" id="PRO_0000439217" description="Truncated cnt-1" evidence="7">
    <location>
        <begin position="1"/>
        <end position="382"/>
    </location>
</feature>
<feature type="domain" description="PH" evidence="2">
    <location>
        <begin position="275"/>
        <end position="373"/>
    </location>
</feature>
<feature type="domain" description="Arf-GAP" evidence="3">
    <location>
        <begin position="447"/>
        <end position="572"/>
    </location>
</feature>
<feature type="repeat" description="ANK 1" evidence="1">
    <location>
        <begin position="690"/>
        <end position="719"/>
    </location>
</feature>
<feature type="repeat" description="ANK 2" evidence="1">
    <location>
        <begin position="723"/>
        <end position="752"/>
    </location>
</feature>
<feature type="repeat" description="ANK 3" evidence="1">
    <location>
        <begin position="756"/>
        <end position="789"/>
    </location>
</feature>
<feature type="zinc finger region" description="C4-type" evidence="3">
    <location>
        <begin position="462"/>
        <end position="485"/>
    </location>
</feature>
<feature type="region of interest" description="Disordered" evidence="4">
    <location>
        <begin position="570"/>
        <end position="604"/>
    </location>
</feature>
<feature type="compositionally biased region" description="Low complexity" evidence="4">
    <location>
        <begin position="588"/>
        <end position="603"/>
    </location>
</feature>
<feature type="site" description="Cleavage; by ced-3" evidence="6">
    <location>
        <begin position="382"/>
        <end position="383"/>
    </location>
</feature>
<feature type="site" description="Cleavage; by ced-3" evidence="6">
    <location>
        <begin position="609"/>
        <end position="610"/>
    </location>
</feature>
<feature type="splice variant" id="VSP_058803" description="In isoform b." evidence="8">
    <original>MTVSNNGMAMPSVPPKIDCSEAIQDSPKFRATVAQHAMYFNRLENRLNEMLRHITAMIDFSKNYTNTFYKLTVSVNQLCDESFSGNPLASTTFQGLSEAYAHTVNLFRTYFDHSNVVTFTKLSNFIKIELTKVAESRAHFENMSQSMDDALVKNASISRQKPADATEGRNALTAVGTCFAHTTLDYVANINIAHAHKDHMILDALWTLVRESSAFFSKGHATFDEWTAADNGAIADTIQTFAAKSKLIERKMQDVHSLVPKE</original>
    <variation>MSTKSIATSSTASSSSSHHQEHTVTELIMFFTSEEPPEPEPFSRSTEKSGIRTSKVITRTITISAETKLKMDLLEEQRREKRVKLEIEKSRIRAENLQRMQEISSEPKTRGSKRSLMRRAAKRTKGRISSLLIRDSSVDSGSITDKALKDKKRGLSLEWEVKDQGRFAESFSDSRLME</variation>
    <location>
        <begin position="1"/>
        <end position="262"/>
    </location>
</feature>
<feature type="mutagenesis site" description="Loss of phosphoinositide binding. Causes a delay in apoptosis during embryonic development." evidence="6">
    <original>K</original>
    <variation>A</variation>
    <location>
        <position position="284"/>
    </location>
</feature>
<feature type="mutagenesis site" description="Loss of ced-3-mediated cleavage. Causes a delay in apoptosis during embryonic development." evidence="6">
    <original>D</original>
    <variation>E</variation>
    <location>
        <position position="382"/>
    </location>
</feature>
<feature type="mutagenesis site" description="No effect on ced-3-mediated cleavage." evidence="6">
    <original>D</original>
    <variation>E</variation>
    <location>
        <position position="508"/>
    </location>
</feature>
<feature type="mutagenesis site" description="Partial loss of ced-3-mediated cleavage. Cleavage at position D-382 is not affected." evidence="6">
    <original>D</original>
    <variation>E</variation>
    <location>
        <position position="609"/>
    </location>
</feature>
<feature type="sequence conflict" description="In Ref. 1; CAA10734." evidence="8" ref="1">
    <original>A</original>
    <variation>G</variation>
    <location>
        <position position="228"/>
    </location>
</feature>
<feature type="sequence conflict" description="In Ref. 1; CAA10735." evidence="8" ref="1">
    <original>P</original>
    <variation>S</variation>
    <location>
        <position position="630"/>
    </location>
</feature>
<feature type="sequence conflict" description="In Ref. 1; CAA10735." evidence="8" ref="1">
    <original>L</original>
    <variation>F</variation>
    <location>
        <position position="695"/>
    </location>
</feature>
<feature type="sequence conflict" description="In Ref. 1; CAA10735." evidence="8" ref="1">
    <original>N</original>
    <variation>D</variation>
    <location>
        <position position="790"/>
    </location>
</feature>
<comment type="function">
    <text evidence="5 9">GTPase-activating protein for the ADP ribosylation factor family (Probable). Regulates endosome recycling downstream of rab-10 and upstream of arf-6 (PubMed:22869721).</text>
</comment>
<comment type="function">
    <molecule>Truncated cnt-1</molecule>
    <text evidence="6">Promotes apoptosis during embryonic development. Produced by caspase ced-3-mediated cleavage, and translocates to the plasma membrane where it prevents the activation of the prosurvival Akt-1/2 and sgk-1 signaling pathway by competing with Akt-1/2 for the binding to PtdIns(3,4,5)P3.</text>
</comment>
<comment type="subunit">
    <text evidence="5">Interacts (via C-terminal ankyrin repeat) with rab-10 (GTP-bound form); the interaction is required for cnt-1 recruitment to endosomes. Interacts (via C-terminal ankyrin repeat) with rab-8 (GTP-bound form) and rab-35 (GTP-bound form).</text>
</comment>
<comment type="subcellular location">
    <subcellularLocation>
        <location evidence="6">Cytoplasm</location>
    </subcellularLocation>
    <subcellularLocation>
        <location evidence="5">Recycling endosome membrane</location>
        <topology evidence="5">Peripheral membrane protein</topology>
    </subcellularLocation>
    <subcellularLocation>
        <location evidence="5">Basolateral cell membrane</location>
        <topology evidence="5">Peripheral membrane protein</topology>
    </subcellularLocation>
    <subcellularLocation>
        <location evidence="5">Apical cell membrane</location>
        <topology evidence="5">Peripheral membrane protein</topology>
    </subcellularLocation>
    <text evidence="5">Colocalizes with rab-10, rab-8, rab-35 and clathrin chc-1 on recycling endosomes in the intestinal epithelium. Partially colocalizes with early endosome marker rab-5 and to a lesser extent with late endosome marker rme-1. Colocalizes with arf-6 on endosomes of the basolateral recycling pathway.</text>
</comment>
<comment type="subcellular location">
    <molecule>Truncated cnt-1</molecule>
    <subcellularLocation>
        <location evidence="6">Cell membrane</location>
        <topology evidence="6">Peripheral membrane protein</topology>
    </subcellularLocation>
    <text evidence="6">Binds PtdIns(3,4,5)P3 at the plasma membrane.</text>
</comment>
<comment type="alternative products">
    <event type="alternative splicing"/>
    <isoform>
        <id>Q9XXH8-1</id>
        <name evidence="12">a</name>
        <sequence type="displayed"/>
    </isoform>
    <isoform>
        <id>Q9XXH8-2</id>
        <name evidence="13">b</name>
        <sequence type="described" ref="VSP_058803"/>
    </isoform>
</comment>
<comment type="developmental stage">
    <text evidence="6">Expressed in embryos.</text>
</comment>
<comment type="domain">
    <text evidence="6">The PH domain binds phosphatidylinositol phosphate (PIP), phosphatidylinositol 4,5-bisphosphate (PIP2) and phosphatidylinositol 3,4,5-trisphosphate (PIP3), and to a lesser extent phosphatidic acid and cardiolipin.</text>
</comment>
<comment type="PTM">
    <text evidence="6">Cleaved by caspase ced-3 after Asp-382 and Asp-609. Cleavage at Asp-382 is required for subsequent cleavage at Asp-609.</text>
</comment>
<comment type="disruption phenotype">
    <text evidence="6">Causes a delay in cell death during embryogenesis characterized by a decrease in the number of cell corpses at the comma and 1,5 fold stage and an increase in the number of cell corpses between the 2-fold and the 3-fold stages.</text>
</comment>
<proteinExistence type="evidence at protein level"/>